<protein>
    <recommendedName>
        <fullName evidence="1">Thymidylate kinase</fullName>
        <ecNumber evidence="1">2.7.4.9</ecNumber>
    </recommendedName>
    <alternativeName>
        <fullName evidence="1">dTMP kinase</fullName>
    </alternativeName>
</protein>
<accession>B0B9T8</accession>
<evidence type="ECO:0000255" key="1">
    <source>
        <dbReference type="HAMAP-Rule" id="MF_00165"/>
    </source>
</evidence>
<gene>
    <name evidence="1" type="primary">tmk</name>
    <name type="ordered locus">CTL0440</name>
</gene>
<organism>
    <name type="scientific">Chlamydia trachomatis serovar L2 (strain ATCC VR-902B / DSM 19102 / 434/Bu)</name>
    <dbReference type="NCBI Taxonomy" id="471472"/>
    <lineage>
        <taxon>Bacteria</taxon>
        <taxon>Pseudomonadati</taxon>
        <taxon>Chlamydiota</taxon>
        <taxon>Chlamydiia</taxon>
        <taxon>Chlamydiales</taxon>
        <taxon>Chlamydiaceae</taxon>
        <taxon>Chlamydia/Chlamydophila group</taxon>
        <taxon>Chlamydia</taxon>
    </lineage>
</organism>
<dbReference type="EC" id="2.7.4.9" evidence="1"/>
<dbReference type="EMBL" id="AM884176">
    <property type="protein sequence ID" value="CAP03879.1"/>
    <property type="molecule type" value="Genomic_DNA"/>
</dbReference>
<dbReference type="RefSeq" id="WP_009873625.1">
    <property type="nucleotide sequence ID" value="NC_010287.1"/>
</dbReference>
<dbReference type="RefSeq" id="YP_001654516.1">
    <property type="nucleotide sequence ID" value="NC_010287.1"/>
</dbReference>
<dbReference type="SMR" id="B0B9T8"/>
<dbReference type="KEGG" id="ctb:CTL0440"/>
<dbReference type="PATRIC" id="fig|471472.4.peg.475"/>
<dbReference type="HOGENOM" id="CLU_049131_0_2_0"/>
<dbReference type="Proteomes" id="UP001154402">
    <property type="component" value="Chromosome"/>
</dbReference>
<dbReference type="GO" id="GO:0005829">
    <property type="term" value="C:cytosol"/>
    <property type="evidence" value="ECO:0007669"/>
    <property type="project" value="TreeGrafter"/>
</dbReference>
<dbReference type="GO" id="GO:0005524">
    <property type="term" value="F:ATP binding"/>
    <property type="evidence" value="ECO:0007669"/>
    <property type="project" value="UniProtKB-UniRule"/>
</dbReference>
<dbReference type="GO" id="GO:0004798">
    <property type="term" value="F:dTMP kinase activity"/>
    <property type="evidence" value="ECO:0007669"/>
    <property type="project" value="UniProtKB-UniRule"/>
</dbReference>
<dbReference type="GO" id="GO:0006233">
    <property type="term" value="P:dTDP biosynthetic process"/>
    <property type="evidence" value="ECO:0007669"/>
    <property type="project" value="InterPro"/>
</dbReference>
<dbReference type="GO" id="GO:0006235">
    <property type="term" value="P:dTTP biosynthetic process"/>
    <property type="evidence" value="ECO:0007669"/>
    <property type="project" value="UniProtKB-UniRule"/>
</dbReference>
<dbReference type="GO" id="GO:0006227">
    <property type="term" value="P:dUDP biosynthetic process"/>
    <property type="evidence" value="ECO:0007669"/>
    <property type="project" value="TreeGrafter"/>
</dbReference>
<dbReference type="CDD" id="cd01672">
    <property type="entry name" value="TMPK"/>
    <property type="match status" value="1"/>
</dbReference>
<dbReference type="FunFam" id="3.40.50.300:FF:000225">
    <property type="entry name" value="Thymidylate kinase"/>
    <property type="match status" value="1"/>
</dbReference>
<dbReference type="Gene3D" id="3.40.50.300">
    <property type="entry name" value="P-loop containing nucleotide triphosphate hydrolases"/>
    <property type="match status" value="1"/>
</dbReference>
<dbReference type="HAMAP" id="MF_00165">
    <property type="entry name" value="Thymidylate_kinase"/>
    <property type="match status" value="1"/>
</dbReference>
<dbReference type="InterPro" id="IPR027417">
    <property type="entry name" value="P-loop_NTPase"/>
</dbReference>
<dbReference type="InterPro" id="IPR039430">
    <property type="entry name" value="Thymidylate_kin-like_dom"/>
</dbReference>
<dbReference type="InterPro" id="IPR018095">
    <property type="entry name" value="Thymidylate_kin_CS"/>
</dbReference>
<dbReference type="InterPro" id="IPR018094">
    <property type="entry name" value="Thymidylate_kinase"/>
</dbReference>
<dbReference type="NCBIfam" id="TIGR00041">
    <property type="entry name" value="DTMP_kinase"/>
    <property type="match status" value="1"/>
</dbReference>
<dbReference type="PANTHER" id="PTHR10344">
    <property type="entry name" value="THYMIDYLATE KINASE"/>
    <property type="match status" value="1"/>
</dbReference>
<dbReference type="PANTHER" id="PTHR10344:SF4">
    <property type="entry name" value="UMP-CMP KINASE 2, MITOCHONDRIAL"/>
    <property type="match status" value="1"/>
</dbReference>
<dbReference type="Pfam" id="PF02223">
    <property type="entry name" value="Thymidylate_kin"/>
    <property type="match status" value="1"/>
</dbReference>
<dbReference type="SUPFAM" id="SSF52540">
    <property type="entry name" value="P-loop containing nucleoside triphosphate hydrolases"/>
    <property type="match status" value="1"/>
</dbReference>
<dbReference type="PROSITE" id="PS01331">
    <property type="entry name" value="THYMIDYLATE_KINASE"/>
    <property type="match status" value="1"/>
</dbReference>
<reference key="1">
    <citation type="journal article" date="2008" name="Genome Res.">
        <title>Chlamydia trachomatis: genome sequence analysis of lymphogranuloma venereum isolates.</title>
        <authorList>
            <person name="Thomson N.R."/>
            <person name="Holden M.T.G."/>
            <person name="Carder C."/>
            <person name="Lennard N."/>
            <person name="Lockey S.J."/>
            <person name="Marsh P."/>
            <person name="Skipp P."/>
            <person name="O'Connor C.D."/>
            <person name="Goodhead I."/>
            <person name="Norbertzcak H."/>
            <person name="Harris B."/>
            <person name="Ormond D."/>
            <person name="Rance R."/>
            <person name="Quail M.A."/>
            <person name="Parkhill J."/>
            <person name="Stephens R.S."/>
            <person name="Clarke I.N."/>
        </authorList>
    </citation>
    <scope>NUCLEOTIDE SEQUENCE [LARGE SCALE GENOMIC DNA]</scope>
    <source>
        <strain>ATCC VR-902B / DSM 19102 / 434/Bu</strain>
    </source>
</reference>
<proteinExistence type="inferred from homology"/>
<name>KTHY_CHLT2</name>
<keyword id="KW-0067">ATP-binding</keyword>
<keyword id="KW-0418">Kinase</keyword>
<keyword id="KW-0545">Nucleotide biosynthesis</keyword>
<keyword id="KW-0547">Nucleotide-binding</keyword>
<keyword id="KW-0808">Transferase</keyword>
<comment type="function">
    <text evidence="1">Phosphorylation of dTMP to form dTDP in both de novo and salvage pathways of dTTP synthesis.</text>
</comment>
<comment type="catalytic activity">
    <reaction evidence="1">
        <text>dTMP + ATP = dTDP + ADP</text>
        <dbReference type="Rhea" id="RHEA:13517"/>
        <dbReference type="ChEBI" id="CHEBI:30616"/>
        <dbReference type="ChEBI" id="CHEBI:58369"/>
        <dbReference type="ChEBI" id="CHEBI:63528"/>
        <dbReference type="ChEBI" id="CHEBI:456216"/>
        <dbReference type="EC" id="2.7.4.9"/>
    </reaction>
</comment>
<comment type="similarity">
    <text evidence="1">Belongs to the thymidylate kinase family.</text>
</comment>
<sequence>MFIVVEGGEGAGKTQFIQALSKRLIEEGREIVTTREPGGCSLGDSVRGLLLDPEQKISPYAELLLFLAARAQHIQEKIIPALKSGKTVISDRFHDSTIVYQGIAGGLGESFVTNLCYHVVGDKPFLPDIIFLLDIPAREGLLRKARQKHLDKFEQKPQIFHQSVREGFLALAEKAPDRYKVLDALLPTEASVDQALLQIRALI</sequence>
<feature type="chain" id="PRO_1000097386" description="Thymidylate kinase">
    <location>
        <begin position="1"/>
        <end position="203"/>
    </location>
</feature>
<feature type="binding site" evidence="1">
    <location>
        <begin position="7"/>
        <end position="14"/>
    </location>
    <ligand>
        <name>ATP</name>
        <dbReference type="ChEBI" id="CHEBI:30616"/>
    </ligand>
</feature>